<proteinExistence type="inferred from homology"/>
<dbReference type="EC" id="2.3.1.9"/>
<dbReference type="EMBL" id="AE016825">
    <property type="protein sequence ID" value="AAQ60458.1"/>
    <property type="molecule type" value="Genomic_DNA"/>
</dbReference>
<dbReference type="EMBL" id="AF061446">
    <property type="protein sequence ID" value="AAC69616.1"/>
    <property type="molecule type" value="Genomic_DNA"/>
</dbReference>
<dbReference type="RefSeq" id="WP_011136337.1">
    <property type="nucleotide sequence ID" value="NC_005085.1"/>
</dbReference>
<dbReference type="SMR" id="Q9ZHI1"/>
<dbReference type="STRING" id="243365.CV_2790"/>
<dbReference type="KEGG" id="cvi:CV_2790"/>
<dbReference type="eggNOG" id="COG0183">
    <property type="taxonomic scope" value="Bacteria"/>
</dbReference>
<dbReference type="HOGENOM" id="CLU_031026_0_0_4"/>
<dbReference type="OrthoDB" id="8558405at2"/>
<dbReference type="UniPathway" id="UPA00058">
    <property type="reaction ID" value="UER00101"/>
</dbReference>
<dbReference type="Proteomes" id="UP000001424">
    <property type="component" value="Chromosome"/>
</dbReference>
<dbReference type="GO" id="GO:0005737">
    <property type="term" value="C:cytoplasm"/>
    <property type="evidence" value="ECO:0007669"/>
    <property type="project" value="UniProtKB-SubCell"/>
</dbReference>
<dbReference type="GO" id="GO:0003985">
    <property type="term" value="F:acetyl-CoA C-acetyltransferase activity"/>
    <property type="evidence" value="ECO:0007669"/>
    <property type="project" value="UniProtKB-EC"/>
</dbReference>
<dbReference type="GO" id="GO:0042621">
    <property type="term" value="P:poly(3-hydroxyalkanoate) biosynthetic process"/>
    <property type="evidence" value="ECO:0007669"/>
    <property type="project" value="UniProtKB-KW"/>
</dbReference>
<dbReference type="CDD" id="cd00751">
    <property type="entry name" value="thiolase"/>
    <property type="match status" value="1"/>
</dbReference>
<dbReference type="FunFam" id="3.40.47.10:FF:000010">
    <property type="entry name" value="Acetyl-CoA acetyltransferase (Thiolase)"/>
    <property type="match status" value="1"/>
</dbReference>
<dbReference type="Gene3D" id="3.40.47.10">
    <property type="match status" value="2"/>
</dbReference>
<dbReference type="InterPro" id="IPR002155">
    <property type="entry name" value="Thiolase"/>
</dbReference>
<dbReference type="InterPro" id="IPR016039">
    <property type="entry name" value="Thiolase-like"/>
</dbReference>
<dbReference type="InterPro" id="IPR020615">
    <property type="entry name" value="Thiolase_acyl_enz_int_AS"/>
</dbReference>
<dbReference type="InterPro" id="IPR020610">
    <property type="entry name" value="Thiolase_AS"/>
</dbReference>
<dbReference type="InterPro" id="IPR020617">
    <property type="entry name" value="Thiolase_C"/>
</dbReference>
<dbReference type="InterPro" id="IPR020613">
    <property type="entry name" value="Thiolase_CS"/>
</dbReference>
<dbReference type="InterPro" id="IPR020616">
    <property type="entry name" value="Thiolase_N"/>
</dbReference>
<dbReference type="NCBIfam" id="TIGR01930">
    <property type="entry name" value="AcCoA-C-Actrans"/>
    <property type="match status" value="1"/>
</dbReference>
<dbReference type="PANTHER" id="PTHR18919:SF107">
    <property type="entry name" value="ACETYL-COA ACETYLTRANSFERASE, CYTOSOLIC"/>
    <property type="match status" value="1"/>
</dbReference>
<dbReference type="PANTHER" id="PTHR18919">
    <property type="entry name" value="ACETYL-COA C-ACYLTRANSFERASE"/>
    <property type="match status" value="1"/>
</dbReference>
<dbReference type="Pfam" id="PF02803">
    <property type="entry name" value="Thiolase_C"/>
    <property type="match status" value="1"/>
</dbReference>
<dbReference type="Pfam" id="PF00108">
    <property type="entry name" value="Thiolase_N"/>
    <property type="match status" value="1"/>
</dbReference>
<dbReference type="PIRSF" id="PIRSF000429">
    <property type="entry name" value="Ac-CoA_Ac_transf"/>
    <property type="match status" value="1"/>
</dbReference>
<dbReference type="SUPFAM" id="SSF53901">
    <property type="entry name" value="Thiolase-like"/>
    <property type="match status" value="2"/>
</dbReference>
<dbReference type="PROSITE" id="PS00098">
    <property type="entry name" value="THIOLASE_1"/>
    <property type="match status" value="1"/>
</dbReference>
<dbReference type="PROSITE" id="PS00737">
    <property type="entry name" value="THIOLASE_2"/>
    <property type="match status" value="1"/>
</dbReference>
<dbReference type="PROSITE" id="PS00099">
    <property type="entry name" value="THIOLASE_3"/>
    <property type="match status" value="1"/>
</dbReference>
<organism>
    <name type="scientific">Chromobacterium violaceum (strain ATCC 12472 / DSM 30191 / JCM 1249 / CCUG 213 / NBRC 12614 / NCIMB 9131 / NCTC 9757 / MK)</name>
    <dbReference type="NCBI Taxonomy" id="243365"/>
    <lineage>
        <taxon>Bacteria</taxon>
        <taxon>Pseudomonadati</taxon>
        <taxon>Pseudomonadota</taxon>
        <taxon>Betaproteobacteria</taxon>
        <taxon>Neisseriales</taxon>
        <taxon>Chromobacteriaceae</taxon>
        <taxon>Chromobacterium</taxon>
    </lineage>
</organism>
<evidence type="ECO:0000250" key="1"/>
<evidence type="ECO:0000255" key="2">
    <source>
        <dbReference type="PROSITE-ProRule" id="PRU10020"/>
    </source>
</evidence>
<evidence type="ECO:0000305" key="3"/>
<protein>
    <recommendedName>
        <fullName>Acetyl-CoA acetyltransferase</fullName>
        <ecNumber>2.3.1.9</ecNumber>
    </recommendedName>
    <alternativeName>
        <fullName>Acetoacetyl-CoA thiolase</fullName>
    </alternativeName>
</protein>
<name>THIL_CHRVO</name>
<feature type="chain" id="PRO_0000206420" description="Acetyl-CoA acetyltransferase">
    <location>
        <begin position="1"/>
        <end position="392"/>
    </location>
</feature>
<feature type="active site" description="Acyl-thioester intermediate" evidence="1">
    <location>
        <position position="87"/>
    </location>
</feature>
<feature type="active site" description="Proton acceptor" evidence="2">
    <location>
        <position position="348"/>
    </location>
</feature>
<feature type="active site" description="Proton acceptor" evidence="2">
    <location>
        <position position="378"/>
    </location>
</feature>
<feature type="sequence conflict" description="In Ref. 2; AAC69616." evidence="3" ref="2">
    <original>QRT</original>
    <variation>HAP</variation>
    <location>
        <begin position="9"/>
        <end position="11"/>
    </location>
</feature>
<feature type="sequence conflict" description="In Ref. 2; AAC69616." evidence="3" ref="2">
    <original>H</original>
    <variation>Y</variation>
    <location>
        <position position="122"/>
    </location>
</feature>
<keyword id="KW-0012">Acyltransferase</keyword>
<keyword id="KW-0963">Cytoplasm</keyword>
<keyword id="KW-0577">PHA biosynthesis</keyword>
<keyword id="KW-1185">Reference proteome</keyword>
<keyword id="KW-0808">Transferase</keyword>
<reference key="1">
    <citation type="journal article" date="2003" name="Proc. Natl. Acad. Sci. U.S.A.">
        <title>The complete genome sequence of Chromobacterium violaceum reveals remarkable and exploitable bacterial adaptability.</title>
        <authorList>
            <person name="Vasconcelos A.T.R."/>
            <person name="de Almeida D.F."/>
            <person name="Hungria M."/>
            <person name="Guimaraes C.T."/>
            <person name="Antonio R.V."/>
            <person name="Almeida F.C."/>
            <person name="de Almeida L.G.P."/>
            <person name="de Almeida R."/>
            <person name="Alves-Gomes J.A."/>
            <person name="Andrade E.M."/>
            <person name="Araripe J."/>
            <person name="de Araujo M.F.F."/>
            <person name="Astolfi-Filho S."/>
            <person name="Azevedo V."/>
            <person name="Baptista A.J."/>
            <person name="Bataus L.A.M."/>
            <person name="Batista J.S."/>
            <person name="Belo A."/>
            <person name="van den Berg C."/>
            <person name="Bogo M."/>
            <person name="Bonatto S."/>
            <person name="Bordignon J."/>
            <person name="Brigido M.M."/>
            <person name="Brito C.A."/>
            <person name="Brocchi M."/>
            <person name="Burity H.A."/>
            <person name="Camargo A.A."/>
            <person name="Cardoso D.D.P."/>
            <person name="Carneiro N.P."/>
            <person name="Carraro D.M."/>
            <person name="Carvalho C.M.B."/>
            <person name="Cascardo J.C.M."/>
            <person name="Cavada B.S."/>
            <person name="Chueire L.M.O."/>
            <person name="Creczynski-Pasa T.B."/>
            <person name="Cunha-Junior N.C."/>
            <person name="Fagundes N."/>
            <person name="Falcao C.L."/>
            <person name="Fantinatti F."/>
            <person name="Farias I.P."/>
            <person name="Felipe M.S.S."/>
            <person name="Ferrari L.P."/>
            <person name="Ferro J.A."/>
            <person name="Ferro M.I.T."/>
            <person name="Franco G.R."/>
            <person name="Freitas N.S.A."/>
            <person name="Furlan L.R."/>
            <person name="Gazzinelli R.T."/>
            <person name="Gomes E.A."/>
            <person name="Goncalves P.R."/>
            <person name="Grangeiro T.B."/>
            <person name="Grattapaglia D."/>
            <person name="Grisard E.C."/>
            <person name="Hanna E.S."/>
            <person name="Jardim S.N."/>
            <person name="Laurino J."/>
            <person name="Leoi L.C.T."/>
            <person name="Lima L.F.A."/>
            <person name="Loureiro M.F."/>
            <person name="Lyra M.C.C.P."/>
            <person name="Madeira H.M.F."/>
            <person name="Manfio G.P."/>
            <person name="Maranhao A.Q."/>
            <person name="Martins W.S."/>
            <person name="di Mauro S.M.Z."/>
            <person name="de Medeiros S.R.B."/>
            <person name="Meissner R.V."/>
            <person name="Moreira M.A.M."/>
            <person name="Nascimento F.F."/>
            <person name="Nicolas M.F."/>
            <person name="Oliveira J.G."/>
            <person name="Oliveira S.C."/>
            <person name="Paixao R.F.C."/>
            <person name="Parente J.A."/>
            <person name="Pedrosa F.O."/>
            <person name="Pena S.D.J."/>
            <person name="Pereira J.O."/>
            <person name="Pereira M."/>
            <person name="Pinto L.S.R.C."/>
            <person name="Pinto L.S."/>
            <person name="Porto J.I.R."/>
            <person name="Potrich D.P."/>
            <person name="Ramalho-Neto C.E."/>
            <person name="Reis A.M.M."/>
            <person name="Rigo L.U."/>
            <person name="Rondinelli E."/>
            <person name="Santos E.B.P."/>
            <person name="Santos F.R."/>
            <person name="Schneider M.P.C."/>
            <person name="Seuanez H.N."/>
            <person name="Silva A.M.R."/>
            <person name="da Silva A.L.C."/>
            <person name="Silva D.W."/>
            <person name="Silva R."/>
            <person name="Simoes I.C."/>
            <person name="Simon D."/>
            <person name="Soares C.M.A."/>
            <person name="Soares R.B.A."/>
            <person name="Souza E.M."/>
            <person name="Souza K.R.L."/>
            <person name="Souza R.C."/>
            <person name="Steffens M.B.R."/>
            <person name="Steindel M."/>
            <person name="Teixeira S.R."/>
            <person name="Urmenyi T."/>
            <person name="Vettore A."/>
            <person name="Wassem R."/>
            <person name="Zaha A."/>
            <person name="Simpson A.J.G."/>
        </authorList>
    </citation>
    <scope>NUCLEOTIDE SEQUENCE [LARGE SCALE GENOMIC DNA]</scope>
    <source>
        <strain>ATCC 12472 / DSM 30191 / JCM 1249 / CCUG 213 / NBRC 12614 / NCIMB 9131 / NCTC 9757 / MK</strain>
    </source>
</reference>
<reference key="2">
    <citation type="journal article" date="1999" name="Appl. Environ. Microbiol.">
        <title>Cloning, molecular analysis, and expression of the polyhydroxyalkanoic acid synthase (phaC) gene from Chromobacterium violaceum.</title>
        <authorList>
            <person name="Kolibachuk D."/>
            <person name="Miller A."/>
            <person name="Dennis D."/>
        </authorList>
    </citation>
    <scope>NUCLEOTIDE SEQUENCE [GENOMIC DNA] OF 1-143</scope>
    <source>
        <strain>ATCC 12472 / DSM 30191 / JCM 1249 / CCUG 213 / NBRC 12614 / NCIMB 9131 / NCTC 9757 / MK</strain>
    </source>
</reference>
<comment type="function">
    <text>Involved in the production of polyhydroxyalkonic acids (PHAs), composed primarily of 3-hydroxybutyric acid (3HB) and 3-hydroxyvaleric acid (3HV).</text>
</comment>
<comment type="catalytic activity">
    <reaction evidence="2">
        <text>2 acetyl-CoA = acetoacetyl-CoA + CoA</text>
        <dbReference type="Rhea" id="RHEA:21036"/>
        <dbReference type="ChEBI" id="CHEBI:57286"/>
        <dbReference type="ChEBI" id="CHEBI:57287"/>
        <dbReference type="ChEBI" id="CHEBI:57288"/>
        <dbReference type="EC" id="2.3.1.9"/>
    </reaction>
</comment>
<comment type="pathway">
    <text>Metabolic intermediate biosynthesis; (R)-mevalonate biosynthesis; (R)-mevalonate from acetyl-CoA: step 1/3.</text>
</comment>
<comment type="subcellular location">
    <subcellularLocation>
        <location evidence="3">Cytoplasm</location>
    </subcellularLocation>
</comment>
<comment type="similarity">
    <text evidence="3">Belongs to the thiolase-like superfamily. Thiolase family.</text>
</comment>
<gene>
    <name type="primary">phaA</name>
    <name type="ordered locus">CV_2790</name>
</gene>
<sequence length="392" mass="40119">MEVAIVAAQRTAIGSFGGGLAKIPAPELGATVIKALLEKTGVKPEDVSEVILGQVLTAGSGQNPARQALIKAGLPVTTPATTLNVVCGSGLRAVHLAAQAILAGDADIVIAGGQESMSLSPHILPGSRDGFRMGNAQLVDTMVNDGLTDAYNAYHMGITAENVAAKYGIGREEQDAFSLQSQQRAAAAQKAGKFRDEIVPVLVPQRKGDPLAFDADEFIKHDASADGLAKLRPAFKKDGTVTAGNASGINDGAAAVLLMSTQKADQLGLKPLAIIKGYALTGCEPEIMGIGPVSATRKALSKAGWTVEDLDLVEANEAFAAQALGVAKELGWGSDKVNVNGGAIALGHPIGASGCRVLVTLLHEMQRRGAKKGLATLCIGGGMGVALAVERP</sequence>
<accession>Q9ZHI1</accession>